<feature type="chain" id="PRO_0000151844" description="ATP phosphoribosyltransferase">
    <location>
        <begin position="1"/>
        <end position="281"/>
    </location>
</feature>
<dbReference type="EC" id="2.4.2.17" evidence="1"/>
<dbReference type="EMBL" id="BX248357">
    <property type="protein sequence ID" value="CAE49785.1"/>
    <property type="molecule type" value="Genomic_DNA"/>
</dbReference>
<dbReference type="RefSeq" id="WP_003851493.1">
    <property type="nucleotide sequence ID" value="NC_002935.2"/>
</dbReference>
<dbReference type="SMR" id="P60803"/>
<dbReference type="STRING" id="257309.DIP1256"/>
<dbReference type="KEGG" id="cdi:DIP1256"/>
<dbReference type="HOGENOM" id="CLU_038115_1_1_11"/>
<dbReference type="UniPathway" id="UPA00031">
    <property type="reaction ID" value="UER00006"/>
</dbReference>
<dbReference type="Proteomes" id="UP000002198">
    <property type="component" value="Chromosome"/>
</dbReference>
<dbReference type="GO" id="GO:0005737">
    <property type="term" value="C:cytoplasm"/>
    <property type="evidence" value="ECO:0007669"/>
    <property type="project" value="UniProtKB-SubCell"/>
</dbReference>
<dbReference type="GO" id="GO:0005524">
    <property type="term" value="F:ATP binding"/>
    <property type="evidence" value="ECO:0007669"/>
    <property type="project" value="UniProtKB-KW"/>
</dbReference>
<dbReference type="GO" id="GO:0003879">
    <property type="term" value="F:ATP phosphoribosyltransferase activity"/>
    <property type="evidence" value="ECO:0007669"/>
    <property type="project" value="UniProtKB-UniRule"/>
</dbReference>
<dbReference type="GO" id="GO:0000287">
    <property type="term" value="F:magnesium ion binding"/>
    <property type="evidence" value="ECO:0007669"/>
    <property type="project" value="UniProtKB-UniRule"/>
</dbReference>
<dbReference type="GO" id="GO:0000105">
    <property type="term" value="P:L-histidine biosynthetic process"/>
    <property type="evidence" value="ECO:0007669"/>
    <property type="project" value="UniProtKB-UniRule"/>
</dbReference>
<dbReference type="CDD" id="cd13591">
    <property type="entry name" value="PBP2_HisGL1"/>
    <property type="match status" value="1"/>
</dbReference>
<dbReference type="FunFam" id="3.30.70.120:FF:000003">
    <property type="entry name" value="ATP phosphoribosyltransferase"/>
    <property type="match status" value="1"/>
</dbReference>
<dbReference type="Gene3D" id="3.30.70.120">
    <property type="match status" value="1"/>
</dbReference>
<dbReference type="Gene3D" id="3.40.190.10">
    <property type="entry name" value="Periplasmic binding protein-like II"/>
    <property type="match status" value="2"/>
</dbReference>
<dbReference type="HAMAP" id="MF_00079">
    <property type="entry name" value="HisG_Long"/>
    <property type="match status" value="1"/>
</dbReference>
<dbReference type="InterPro" id="IPR020621">
    <property type="entry name" value="ATP-PRT_HisG_long"/>
</dbReference>
<dbReference type="InterPro" id="IPR013820">
    <property type="entry name" value="ATP_PRibTrfase_cat"/>
</dbReference>
<dbReference type="InterPro" id="IPR018198">
    <property type="entry name" value="ATP_PRibTrfase_CS"/>
</dbReference>
<dbReference type="InterPro" id="IPR001348">
    <property type="entry name" value="ATP_PRibTrfase_HisG"/>
</dbReference>
<dbReference type="InterPro" id="IPR013115">
    <property type="entry name" value="HisG_C"/>
</dbReference>
<dbReference type="InterPro" id="IPR011322">
    <property type="entry name" value="N-reg_PII-like_a/b"/>
</dbReference>
<dbReference type="InterPro" id="IPR015867">
    <property type="entry name" value="N-reg_PII/ATP_PRibTrfase_C"/>
</dbReference>
<dbReference type="NCBIfam" id="TIGR00070">
    <property type="entry name" value="hisG"/>
    <property type="match status" value="1"/>
</dbReference>
<dbReference type="NCBIfam" id="TIGR03455">
    <property type="entry name" value="HisG_C-term"/>
    <property type="match status" value="1"/>
</dbReference>
<dbReference type="PANTHER" id="PTHR21403:SF8">
    <property type="entry name" value="ATP PHOSPHORIBOSYLTRANSFERASE"/>
    <property type="match status" value="1"/>
</dbReference>
<dbReference type="PANTHER" id="PTHR21403">
    <property type="entry name" value="ATP PHOSPHORIBOSYLTRANSFERASE ATP-PRTASE"/>
    <property type="match status" value="1"/>
</dbReference>
<dbReference type="Pfam" id="PF01634">
    <property type="entry name" value="HisG"/>
    <property type="match status" value="1"/>
</dbReference>
<dbReference type="Pfam" id="PF08029">
    <property type="entry name" value="HisG_C"/>
    <property type="match status" value="1"/>
</dbReference>
<dbReference type="SUPFAM" id="SSF54913">
    <property type="entry name" value="GlnB-like"/>
    <property type="match status" value="1"/>
</dbReference>
<dbReference type="SUPFAM" id="SSF53850">
    <property type="entry name" value="Periplasmic binding protein-like II"/>
    <property type="match status" value="1"/>
</dbReference>
<dbReference type="PROSITE" id="PS01316">
    <property type="entry name" value="ATP_P_PHORIBOSYLTR"/>
    <property type="match status" value="1"/>
</dbReference>
<gene>
    <name evidence="1" type="primary">hisG</name>
    <name type="ordered locus">DIP1256</name>
</gene>
<keyword id="KW-0028">Amino-acid biosynthesis</keyword>
<keyword id="KW-0067">ATP-binding</keyword>
<keyword id="KW-0963">Cytoplasm</keyword>
<keyword id="KW-0328">Glycosyltransferase</keyword>
<keyword id="KW-0368">Histidine biosynthesis</keyword>
<keyword id="KW-0460">Magnesium</keyword>
<keyword id="KW-0479">Metal-binding</keyword>
<keyword id="KW-0547">Nucleotide-binding</keyword>
<keyword id="KW-1185">Reference proteome</keyword>
<keyword id="KW-0808">Transferase</keyword>
<reference key="1">
    <citation type="journal article" date="2003" name="Nucleic Acids Res.">
        <title>The complete genome sequence and analysis of Corynebacterium diphtheriae NCTC13129.</title>
        <authorList>
            <person name="Cerdeno-Tarraga A.-M."/>
            <person name="Efstratiou A."/>
            <person name="Dover L.G."/>
            <person name="Holden M.T.G."/>
            <person name="Pallen M.J."/>
            <person name="Bentley S.D."/>
            <person name="Besra G.S."/>
            <person name="Churcher C.M."/>
            <person name="James K.D."/>
            <person name="De Zoysa A."/>
            <person name="Chillingworth T."/>
            <person name="Cronin A."/>
            <person name="Dowd L."/>
            <person name="Feltwell T."/>
            <person name="Hamlin N."/>
            <person name="Holroyd S."/>
            <person name="Jagels K."/>
            <person name="Moule S."/>
            <person name="Quail M.A."/>
            <person name="Rabbinowitsch E."/>
            <person name="Rutherford K.M."/>
            <person name="Thomson N.R."/>
            <person name="Unwin L."/>
            <person name="Whitehead S."/>
            <person name="Barrell B.G."/>
            <person name="Parkhill J."/>
        </authorList>
    </citation>
    <scope>NUCLEOTIDE SEQUENCE [LARGE SCALE GENOMIC DNA]</scope>
    <source>
        <strain>ATCC 700971 / NCTC 13129 / Biotype gravis</strain>
    </source>
</reference>
<comment type="function">
    <text evidence="1">Catalyzes the condensation of ATP and 5-phosphoribose 1-diphosphate to form N'-(5'-phosphoribosyl)-ATP (PR-ATP). Has a crucial role in the pathway because the rate of histidine biosynthesis seems to be controlled primarily by regulation of HisG enzymatic activity.</text>
</comment>
<comment type="catalytic activity">
    <reaction evidence="1">
        <text>1-(5-phospho-beta-D-ribosyl)-ATP + diphosphate = 5-phospho-alpha-D-ribose 1-diphosphate + ATP</text>
        <dbReference type="Rhea" id="RHEA:18473"/>
        <dbReference type="ChEBI" id="CHEBI:30616"/>
        <dbReference type="ChEBI" id="CHEBI:33019"/>
        <dbReference type="ChEBI" id="CHEBI:58017"/>
        <dbReference type="ChEBI" id="CHEBI:73183"/>
        <dbReference type="EC" id="2.4.2.17"/>
    </reaction>
</comment>
<comment type="cofactor">
    <cofactor evidence="1">
        <name>Mg(2+)</name>
        <dbReference type="ChEBI" id="CHEBI:18420"/>
    </cofactor>
</comment>
<comment type="activity regulation">
    <text evidence="1">Feedback inhibited by histidine.</text>
</comment>
<comment type="pathway">
    <text evidence="1">Amino-acid biosynthesis; L-histidine biosynthesis; L-histidine from 5-phospho-alpha-D-ribose 1-diphosphate: step 1/9.</text>
</comment>
<comment type="subcellular location">
    <subcellularLocation>
        <location evidence="1">Cytoplasm</location>
    </subcellularLocation>
</comment>
<comment type="similarity">
    <text evidence="1">Belongs to the ATP phosphoribosyltransferase family. Long subfamily.</text>
</comment>
<proteinExistence type="inferred from homology"/>
<sequence length="281" mass="30481">MLKIAIPNKGSLSEAAVEILAEAGYAGRGESKTLNVYDKTNDVEFFFLRPKDIAIYVAGGQLDLGITGRDLATDSHANVEEVMSLGFGNSSFRYAAPADQKWTVEMLEGKRIATSYPNLVRDDLQARGINATVIRLDGAVEISIKLGVADAIADVVSTGRTLRKQGLATFGEVICQSEAVIVGQQGNVVDNEQKVFLRRIEGILHAQNYLMLDYNIDRVNLAASEKITPGISGPTVSPLARENWVAVRAMVPRKEANHIMDQLSELGAQAILASEIRIARL</sequence>
<protein>
    <recommendedName>
        <fullName evidence="1">ATP phosphoribosyltransferase</fullName>
        <shortName evidence="1">ATP-PRT</shortName>
        <shortName evidence="1">ATP-PRTase</shortName>
        <ecNumber evidence="1">2.4.2.17</ecNumber>
    </recommendedName>
</protein>
<evidence type="ECO:0000255" key="1">
    <source>
        <dbReference type="HAMAP-Rule" id="MF_00079"/>
    </source>
</evidence>
<organism>
    <name type="scientific">Corynebacterium diphtheriae (strain ATCC 700971 / NCTC 13129 / Biotype gravis)</name>
    <dbReference type="NCBI Taxonomy" id="257309"/>
    <lineage>
        <taxon>Bacteria</taxon>
        <taxon>Bacillati</taxon>
        <taxon>Actinomycetota</taxon>
        <taxon>Actinomycetes</taxon>
        <taxon>Mycobacteriales</taxon>
        <taxon>Corynebacteriaceae</taxon>
        <taxon>Corynebacterium</taxon>
    </lineage>
</organism>
<accession>P60803</accession>
<name>HIS1_CORDI</name>